<protein>
    <recommendedName>
        <fullName evidence="1">NADH-quinone oxidoreductase subunit N</fullName>
        <ecNumber evidence="1">7.1.1.-</ecNumber>
    </recommendedName>
    <alternativeName>
        <fullName evidence="1">NADH dehydrogenase I subunit N</fullName>
    </alternativeName>
    <alternativeName>
        <fullName evidence="1">NDH-1 subunit N</fullName>
    </alternativeName>
</protein>
<proteinExistence type="inferred from homology"/>
<comment type="function">
    <text evidence="1">NDH-1 shuttles electrons from NADH, via FMN and iron-sulfur (Fe-S) centers, to quinones in the respiratory chain. The immediate electron acceptor for the enzyme in this species is believed to be ubiquinone. Couples the redox reaction to proton translocation (for every two electrons transferred, four hydrogen ions are translocated across the cytoplasmic membrane), and thus conserves the redox energy in a proton gradient.</text>
</comment>
<comment type="catalytic activity">
    <reaction evidence="1">
        <text>a quinone + NADH + 5 H(+)(in) = a quinol + NAD(+) + 4 H(+)(out)</text>
        <dbReference type="Rhea" id="RHEA:57888"/>
        <dbReference type="ChEBI" id="CHEBI:15378"/>
        <dbReference type="ChEBI" id="CHEBI:24646"/>
        <dbReference type="ChEBI" id="CHEBI:57540"/>
        <dbReference type="ChEBI" id="CHEBI:57945"/>
        <dbReference type="ChEBI" id="CHEBI:132124"/>
    </reaction>
</comment>
<comment type="subunit">
    <text evidence="1">NDH-1 is composed of 14 different subunits. Subunits NuoA, H, J, K, L, M, N constitute the membrane sector of the complex.</text>
</comment>
<comment type="subcellular location">
    <subcellularLocation>
        <location evidence="1">Cell inner membrane</location>
        <topology evidence="1">Multi-pass membrane protein</topology>
    </subcellularLocation>
</comment>
<comment type="similarity">
    <text evidence="1">Belongs to the complex I subunit 2 family.</text>
</comment>
<evidence type="ECO:0000255" key="1">
    <source>
        <dbReference type="HAMAP-Rule" id="MF_00445"/>
    </source>
</evidence>
<reference key="1">
    <citation type="submission" date="2006-02" db="EMBL/GenBank/DDBJ databases">
        <title>Complete sequence of chromosome of Jannaschia sp. CCS1.</title>
        <authorList>
            <consortium name="US DOE Joint Genome Institute"/>
            <person name="Copeland A."/>
            <person name="Lucas S."/>
            <person name="Lapidus A."/>
            <person name="Barry K."/>
            <person name="Detter J.C."/>
            <person name="Glavina del Rio T."/>
            <person name="Hammon N."/>
            <person name="Israni S."/>
            <person name="Pitluck S."/>
            <person name="Brettin T."/>
            <person name="Bruce D."/>
            <person name="Han C."/>
            <person name="Tapia R."/>
            <person name="Gilna P."/>
            <person name="Chertkov O."/>
            <person name="Saunders E."/>
            <person name="Schmutz J."/>
            <person name="Larimer F."/>
            <person name="Land M."/>
            <person name="Kyrpides N."/>
            <person name="Lykidis A."/>
            <person name="Moran M.A."/>
            <person name="Belas R."/>
            <person name="Ye W."/>
            <person name="Buchan A."/>
            <person name="Gonzalez J.M."/>
            <person name="Schell M.A."/>
            <person name="Richardson P."/>
        </authorList>
    </citation>
    <scope>NUCLEOTIDE SEQUENCE [LARGE SCALE GENOMIC DNA]</scope>
    <source>
        <strain>CCS1</strain>
    </source>
</reference>
<keyword id="KW-0997">Cell inner membrane</keyword>
<keyword id="KW-1003">Cell membrane</keyword>
<keyword id="KW-0472">Membrane</keyword>
<keyword id="KW-0520">NAD</keyword>
<keyword id="KW-0874">Quinone</keyword>
<keyword id="KW-1185">Reference proteome</keyword>
<keyword id="KW-1278">Translocase</keyword>
<keyword id="KW-0812">Transmembrane</keyword>
<keyword id="KW-1133">Transmembrane helix</keyword>
<keyword id="KW-0813">Transport</keyword>
<keyword id="KW-0830">Ubiquinone</keyword>
<gene>
    <name evidence="1" type="primary">nuoN</name>
    <name type="ordered locus">Jann_1196</name>
</gene>
<dbReference type="EC" id="7.1.1.-" evidence="1"/>
<dbReference type="EMBL" id="CP000264">
    <property type="protein sequence ID" value="ABD54113.1"/>
    <property type="molecule type" value="Genomic_DNA"/>
</dbReference>
<dbReference type="RefSeq" id="WP_011454320.1">
    <property type="nucleotide sequence ID" value="NC_007802.1"/>
</dbReference>
<dbReference type="SMR" id="Q28T49"/>
<dbReference type="STRING" id="290400.Jann_1196"/>
<dbReference type="KEGG" id="jan:Jann_1196"/>
<dbReference type="eggNOG" id="COG1007">
    <property type="taxonomic scope" value="Bacteria"/>
</dbReference>
<dbReference type="HOGENOM" id="CLU_007100_1_5_5"/>
<dbReference type="OrthoDB" id="9811718at2"/>
<dbReference type="Proteomes" id="UP000008326">
    <property type="component" value="Chromosome"/>
</dbReference>
<dbReference type="GO" id="GO:0005886">
    <property type="term" value="C:plasma membrane"/>
    <property type="evidence" value="ECO:0007669"/>
    <property type="project" value="UniProtKB-SubCell"/>
</dbReference>
<dbReference type="GO" id="GO:0008137">
    <property type="term" value="F:NADH dehydrogenase (ubiquinone) activity"/>
    <property type="evidence" value="ECO:0007669"/>
    <property type="project" value="InterPro"/>
</dbReference>
<dbReference type="GO" id="GO:0050136">
    <property type="term" value="F:NADH:ubiquinone reductase (non-electrogenic) activity"/>
    <property type="evidence" value="ECO:0007669"/>
    <property type="project" value="UniProtKB-UniRule"/>
</dbReference>
<dbReference type="GO" id="GO:0048038">
    <property type="term" value="F:quinone binding"/>
    <property type="evidence" value="ECO:0007669"/>
    <property type="project" value="UniProtKB-KW"/>
</dbReference>
<dbReference type="GO" id="GO:0042773">
    <property type="term" value="P:ATP synthesis coupled electron transport"/>
    <property type="evidence" value="ECO:0007669"/>
    <property type="project" value="InterPro"/>
</dbReference>
<dbReference type="HAMAP" id="MF_00445">
    <property type="entry name" value="NDH1_NuoN_1"/>
    <property type="match status" value="1"/>
</dbReference>
<dbReference type="InterPro" id="IPR010096">
    <property type="entry name" value="NADH-Q_OxRdtase_suN/2"/>
</dbReference>
<dbReference type="InterPro" id="IPR001750">
    <property type="entry name" value="ND/Mrp_TM"/>
</dbReference>
<dbReference type="NCBIfam" id="TIGR01770">
    <property type="entry name" value="NDH_I_N"/>
    <property type="match status" value="1"/>
</dbReference>
<dbReference type="NCBIfam" id="NF004440">
    <property type="entry name" value="PRK05777.1-3"/>
    <property type="match status" value="1"/>
</dbReference>
<dbReference type="PANTHER" id="PTHR22773">
    <property type="entry name" value="NADH DEHYDROGENASE"/>
    <property type="match status" value="1"/>
</dbReference>
<dbReference type="Pfam" id="PF00361">
    <property type="entry name" value="Proton_antipo_M"/>
    <property type="match status" value="1"/>
</dbReference>
<dbReference type="PRINTS" id="PR01434">
    <property type="entry name" value="NADHDHGNASE5"/>
</dbReference>
<organism>
    <name type="scientific">Jannaschia sp. (strain CCS1)</name>
    <dbReference type="NCBI Taxonomy" id="290400"/>
    <lineage>
        <taxon>Bacteria</taxon>
        <taxon>Pseudomonadati</taxon>
        <taxon>Pseudomonadota</taxon>
        <taxon>Alphaproteobacteria</taxon>
        <taxon>Rhodobacterales</taxon>
        <taxon>Roseobacteraceae</taxon>
        <taxon>Jannaschia</taxon>
    </lineage>
</organism>
<accession>Q28T49</accession>
<name>NUON_JANSC</name>
<feature type="chain" id="PRO_0000391169" description="NADH-quinone oxidoreductase subunit N">
    <location>
        <begin position="1"/>
        <end position="483"/>
    </location>
</feature>
<feature type="transmembrane region" description="Helical" evidence="1">
    <location>
        <begin position="7"/>
        <end position="27"/>
    </location>
</feature>
<feature type="transmembrane region" description="Helical" evidence="1">
    <location>
        <begin position="33"/>
        <end position="53"/>
    </location>
</feature>
<feature type="transmembrane region" description="Helical" evidence="1">
    <location>
        <begin position="76"/>
        <end position="96"/>
    </location>
</feature>
<feature type="transmembrane region" description="Helical" evidence="1">
    <location>
        <begin position="108"/>
        <end position="128"/>
    </location>
</feature>
<feature type="transmembrane region" description="Helical" evidence="1">
    <location>
        <begin position="161"/>
        <end position="181"/>
    </location>
</feature>
<feature type="transmembrane region" description="Helical" evidence="1">
    <location>
        <begin position="196"/>
        <end position="216"/>
    </location>
</feature>
<feature type="transmembrane region" description="Helical" evidence="1">
    <location>
        <begin position="235"/>
        <end position="255"/>
    </location>
</feature>
<feature type="transmembrane region" description="Helical" evidence="1">
    <location>
        <begin position="272"/>
        <end position="292"/>
    </location>
</feature>
<feature type="transmembrane region" description="Helical" evidence="1">
    <location>
        <begin position="297"/>
        <end position="317"/>
    </location>
</feature>
<feature type="transmembrane region" description="Helical" evidence="1">
    <location>
        <begin position="323"/>
        <end position="343"/>
    </location>
</feature>
<feature type="transmembrane region" description="Helical" evidence="1">
    <location>
        <begin position="369"/>
        <end position="389"/>
    </location>
</feature>
<feature type="transmembrane region" description="Helical" evidence="1">
    <location>
        <begin position="402"/>
        <end position="422"/>
    </location>
</feature>
<feature type="transmembrane region" description="Helical" evidence="1">
    <location>
        <begin position="442"/>
        <end position="462"/>
    </location>
</feature>
<sequence>MISADLAILTPEIVLSLFAMAGLLGAVYTSKDALASAMCWGTAALFIIMAFYIGVTGNGAREAFDGMIIDDAFSRFAKITILLSAAAILMISQDYMAKADLLRFEFPVLIILAVVGMMIMVSAGDLIALYMGLELQSLALYVVAAMRRDSVRSTEAGLKYFVLGALSSGLLLYGSSLAYGFAGTTQFAGIIEAAQGGDMPLGLLFGLVFITAGLAFKVSAAPFHMWTPDVYEGSPTPITALFATAPKVAAMALFARVVHDAFGGVIGDWQQIVAFLAVVSMFLGAIAAIGQTDIKRLMAYSSISHMGFALMGLSAGTAQGVEAMLIYMAIYVAMNIGTFAFILTMERNGRHVTEISSLSAFASKEPTKALAILVMMFSLAGVPPLLGFFGKYAVLVAAVDAGLVWLAIAGVIASVIGAFYYIRIVYLMYFGEADEGALDGKMGLVPYVGLIAMALVIGLGWVPGVNLFGIEAPAETAAAMLIR</sequence>